<keyword id="KW-0143">Chaperone</keyword>
<keyword id="KW-0963">Cytoplasm</keyword>
<keyword id="KW-0235">DNA replication</keyword>
<keyword id="KW-0479">Metal-binding</keyword>
<keyword id="KW-1185">Reference proteome</keyword>
<keyword id="KW-0677">Repeat</keyword>
<keyword id="KW-0346">Stress response</keyword>
<keyword id="KW-0862">Zinc</keyword>
<keyword id="KW-0863">Zinc-finger</keyword>
<name>DNAJ_OPITP</name>
<comment type="function">
    <text evidence="1">Participates actively in the response to hyperosmotic and heat shock by preventing the aggregation of stress-denatured proteins and by disaggregating proteins, also in an autonomous, DnaK-independent fashion. Unfolded proteins bind initially to DnaJ; upon interaction with the DnaJ-bound protein, DnaK hydrolyzes its bound ATP, resulting in the formation of a stable complex. GrpE releases ADP from DnaK; ATP binding to DnaK triggers the release of the substrate protein, thus completing the reaction cycle. Several rounds of ATP-dependent interactions between DnaJ, DnaK and GrpE are required for fully efficient folding. Also involved, together with DnaK and GrpE, in the DNA replication of plasmids through activation of initiation proteins.</text>
</comment>
<comment type="cofactor">
    <cofactor evidence="1">
        <name>Zn(2+)</name>
        <dbReference type="ChEBI" id="CHEBI:29105"/>
    </cofactor>
    <text evidence="1">Binds 2 Zn(2+) ions per monomer.</text>
</comment>
<comment type="subunit">
    <text evidence="1">Homodimer.</text>
</comment>
<comment type="subcellular location">
    <subcellularLocation>
        <location evidence="1">Cytoplasm</location>
    </subcellularLocation>
</comment>
<comment type="domain">
    <text evidence="1">The J domain is necessary and sufficient to stimulate DnaK ATPase activity. Zinc center 1 plays an important role in the autonomous, DnaK-independent chaperone activity of DnaJ. Zinc center 2 is essential for interaction with DnaK and for DnaJ activity.</text>
</comment>
<comment type="similarity">
    <text evidence="1">Belongs to the DnaJ family.</text>
</comment>
<proteinExistence type="inferred from homology"/>
<reference key="1">
    <citation type="journal article" date="2011" name="J. Bacteriol.">
        <title>Genome sequence of the verrucomicrobium Opitutus terrae PB90-1, an abundant inhabitant of rice paddy soil ecosystems.</title>
        <authorList>
            <person name="van Passel M.W."/>
            <person name="Kant R."/>
            <person name="Palva A."/>
            <person name="Copeland A."/>
            <person name="Lucas S."/>
            <person name="Lapidus A."/>
            <person name="Glavina del Rio T."/>
            <person name="Pitluck S."/>
            <person name="Goltsman E."/>
            <person name="Clum A."/>
            <person name="Sun H."/>
            <person name="Schmutz J."/>
            <person name="Larimer F.W."/>
            <person name="Land M.L."/>
            <person name="Hauser L."/>
            <person name="Kyrpides N."/>
            <person name="Mikhailova N."/>
            <person name="Richardson P.P."/>
            <person name="Janssen P.H."/>
            <person name="de Vos W.M."/>
            <person name="Smidt H."/>
        </authorList>
    </citation>
    <scope>NUCLEOTIDE SEQUENCE [LARGE SCALE GENOMIC DNA]</scope>
    <source>
        <strain>DSM 11246 / JCM 15787 / PB90-1</strain>
    </source>
</reference>
<accession>B1ZUS0</accession>
<organism>
    <name type="scientific">Opitutus terrae (strain DSM 11246 / JCM 15787 / PB90-1)</name>
    <dbReference type="NCBI Taxonomy" id="452637"/>
    <lineage>
        <taxon>Bacteria</taxon>
        <taxon>Pseudomonadati</taxon>
        <taxon>Verrucomicrobiota</taxon>
        <taxon>Opitutia</taxon>
        <taxon>Opitutales</taxon>
        <taxon>Opitutaceae</taxon>
        <taxon>Opitutus</taxon>
    </lineage>
</organism>
<feature type="chain" id="PRO_1000137707" description="Chaperone protein DnaJ">
    <location>
        <begin position="1"/>
        <end position="382"/>
    </location>
</feature>
<feature type="domain" description="J" evidence="1">
    <location>
        <begin position="5"/>
        <end position="70"/>
    </location>
</feature>
<feature type="repeat" description="CXXCXGXG motif">
    <location>
        <begin position="159"/>
        <end position="166"/>
    </location>
</feature>
<feature type="repeat" description="CXXCXGXG motif">
    <location>
        <begin position="176"/>
        <end position="183"/>
    </location>
</feature>
<feature type="repeat" description="CXXCXGXG motif">
    <location>
        <begin position="198"/>
        <end position="205"/>
    </location>
</feature>
<feature type="repeat" description="CXXCXGXG motif">
    <location>
        <begin position="212"/>
        <end position="219"/>
    </location>
</feature>
<feature type="zinc finger region" description="CR-type" evidence="1">
    <location>
        <begin position="146"/>
        <end position="224"/>
    </location>
</feature>
<feature type="region of interest" description="Disordered" evidence="2">
    <location>
        <begin position="230"/>
        <end position="250"/>
    </location>
</feature>
<feature type="binding site" evidence="1">
    <location>
        <position position="159"/>
    </location>
    <ligand>
        <name>Zn(2+)</name>
        <dbReference type="ChEBI" id="CHEBI:29105"/>
        <label>1</label>
    </ligand>
</feature>
<feature type="binding site" evidence="1">
    <location>
        <position position="162"/>
    </location>
    <ligand>
        <name>Zn(2+)</name>
        <dbReference type="ChEBI" id="CHEBI:29105"/>
        <label>1</label>
    </ligand>
</feature>
<feature type="binding site" evidence="1">
    <location>
        <position position="176"/>
    </location>
    <ligand>
        <name>Zn(2+)</name>
        <dbReference type="ChEBI" id="CHEBI:29105"/>
        <label>2</label>
    </ligand>
</feature>
<feature type="binding site" evidence="1">
    <location>
        <position position="179"/>
    </location>
    <ligand>
        <name>Zn(2+)</name>
        <dbReference type="ChEBI" id="CHEBI:29105"/>
        <label>2</label>
    </ligand>
</feature>
<feature type="binding site" evidence="1">
    <location>
        <position position="198"/>
    </location>
    <ligand>
        <name>Zn(2+)</name>
        <dbReference type="ChEBI" id="CHEBI:29105"/>
        <label>2</label>
    </ligand>
</feature>
<feature type="binding site" evidence="1">
    <location>
        <position position="201"/>
    </location>
    <ligand>
        <name>Zn(2+)</name>
        <dbReference type="ChEBI" id="CHEBI:29105"/>
        <label>2</label>
    </ligand>
</feature>
<feature type="binding site" evidence="1">
    <location>
        <position position="212"/>
    </location>
    <ligand>
        <name>Zn(2+)</name>
        <dbReference type="ChEBI" id="CHEBI:29105"/>
        <label>1</label>
    </ligand>
</feature>
<feature type="binding site" evidence="1">
    <location>
        <position position="215"/>
    </location>
    <ligand>
        <name>Zn(2+)</name>
        <dbReference type="ChEBI" id="CHEBI:29105"/>
        <label>1</label>
    </ligand>
</feature>
<gene>
    <name evidence="1" type="primary">dnaJ</name>
    <name type="ordered locus">Oter_1670</name>
</gene>
<dbReference type="EMBL" id="CP001032">
    <property type="protein sequence ID" value="ACB74954.1"/>
    <property type="molecule type" value="Genomic_DNA"/>
</dbReference>
<dbReference type="RefSeq" id="WP_012374491.1">
    <property type="nucleotide sequence ID" value="NC_010571.1"/>
</dbReference>
<dbReference type="SMR" id="B1ZUS0"/>
<dbReference type="STRING" id="452637.Oter_1670"/>
<dbReference type="KEGG" id="ote:Oter_1670"/>
<dbReference type="eggNOG" id="COG0484">
    <property type="taxonomic scope" value="Bacteria"/>
</dbReference>
<dbReference type="HOGENOM" id="CLU_017633_0_7_0"/>
<dbReference type="OrthoDB" id="9779889at2"/>
<dbReference type="Proteomes" id="UP000007013">
    <property type="component" value="Chromosome"/>
</dbReference>
<dbReference type="GO" id="GO:0005737">
    <property type="term" value="C:cytoplasm"/>
    <property type="evidence" value="ECO:0007669"/>
    <property type="project" value="UniProtKB-SubCell"/>
</dbReference>
<dbReference type="GO" id="GO:0005524">
    <property type="term" value="F:ATP binding"/>
    <property type="evidence" value="ECO:0007669"/>
    <property type="project" value="InterPro"/>
</dbReference>
<dbReference type="GO" id="GO:0031072">
    <property type="term" value="F:heat shock protein binding"/>
    <property type="evidence" value="ECO:0007669"/>
    <property type="project" value="InterPro"/>
</dbReference>
<dbReference type="GO" id="GO:0051082">
    <property type="term" value="F:unfolded protein binding"/>
    <property type="evidence" value="ECO:0007669"/>
    <property type="project" value="UniProtKB-UniRule"/>
</dbReference>
<dbReference type="GO" id="GO:0008270">
    <property type="term" value="F:zinc ion binding"/>
    <property type="evidence" value="ECO:0007669"/>
    <property type="project" value="UniProtKB-UniRule"/>
</dbReference>
<dbReference type="GO" id="GO:0051085">
    <property type="term" value="P:chaperone cofactor-dependent protein refolding"/>
    <property type="evidence" value="ECO:0007669"/>
    <property type="project" value="TreeGrafter"/>
</dbReference>
<dbReference type="GO" id="GO:0006260">
    <property type="term" value="P:DNA replication"/>
    <property type="evidence" value="ECO:0007669"/>
    <property type="project" value="UniProtKB-KW"/>
</dbReference>
<dbReference type="GO" id="GO:0042026">
    <property type="term" value="P:protein refolding"/>
    <property type="evidence" value="ECO:0007669"/>
    <property type="project" value="TreeGrafter"/>
</dbReference>
<dbReference type="GO" id="GO:0009408">
    <property type="term" value="P:response to heat"/>
    <property type="evidence" value="ECO:0007669"/>
    <property type="project" value="InterPro"/>
</dbReference>
<dbReference type="CDD" id="cd06257">
    <property type="entry name" value="DnaJ"/>
    <property type="match status" value="1"/>
</dbReference>
<dbReference type="CDD" id="cd10747">
    <property type="entry name" value="DnaJ_C"/>
    <property type="match status" value="1"/>
</dbReference>
<dbReference type="CDD" id="cd10719">
    <property type="entry name" value="DnaJ_zf"/>
    <property type="match status" value="1"/>
</dbReference>
<dbReference type="FunFam" id="1.10.287.110:FF:000034">
    <property type="entry name" value="Chaperone protein DnaJ"/>
    <property type="match status" value="1"/>
</dbReference>
<dbReference type="FunFam" id="2.10.230.10:FF:000002">
    <property type="entry name" value="Molecular chaperone DnaJ"/>
    <property type="match status" value="1"/>
</dbReference>
<dbReference type="FunFam" id="2.60.260.20:FF:000004">
    <property type="entry name" value="Molecular chaperone DnaJ"/>
    <property type="match status" value="1"/>
</dbReference>
<dbReference type="Gene3D" id="1.10.287.110">
    <property type="entry name" value="DnaJ domain"/>
    <property type="match status" value="1"/>
</dbReference>
<dbReference type="Gene3D" id="2.10.230.10">
    <property type="entry name" value="Heat shock protein DnaJ, cysteine-rich domain"/>
    <property type="match status" value="1"/>
</dbReference>
<dbReference type="Gene3D" id="2.60.260.20">
    <property type="entry name" value="Urease metallochaperone UreE, N-terminal domain"/>
    <property type="match status" value="2"/>
</dbReference>
<dbReference type="HAMAP" id="MF_01152">
    <property type="entry name" value="DnaJ"/>
    <property type="match status" value="1"/>
</dbReference>
<dbReference type="InterPro" id="IPR012724">
    <property type="entry name" value="DnaJ"/>
</dbReference>
<dbReference type="InterPro" id="IPR002939">
    <property type="entry name" value="DnaJ_C"/>
</dbReference>
<dbReference type="InterPro" id="IPR001623">
    <property type="entry name" value="DnaJ_domain"/>
</dbReference>
<dbReference type="InterPro" id="IPR018253">
    <property type="entry name" value="DnaJ_domain_CS"/>
</dbReference>
<dbReference type="InterPro" id="IPR008971">
    <property type="entry name" value="HSP40/DnaJ_pept-bd"/>
</dbReference>
<dbReference type="InterPro" id="IPR001305">
    <property type="entry name" value="HSP_DnaJ_Cys-rich_dom"/>
</dbReference>
<dbReference type="InterPro" id="IPR036410">
    <property type="entry name" value="HSP_DnaJ_Cys-rich_dom_sf"/>
</dbReference>
<dbReference type="InterPro" id="IPR036869">
    <property type="entry name" value="J_dom_sf"/>
</dbReference>
<dbReference type="NCBIfam" id="TIGR02349">
    <property type="entry name" value="DnaJ_bact"/>
    <property type="match status" value="1"/>
</dbReference>
<dbReference type="NCBIfam" id="NF008035">
    <property type="entry name" value="PRK10767.1"/>
    <property type="match status" value="1"/>
</dbReference>
<dbReference type="PANTHER" id="PTHR43096:SF48">
    <property type="entry name" value="CHAPERONE PROTEIN DNAJ"/>
    <property type="match status" value="1"/>
</dbReference>
<dbReference type="PANTHER" id="PTHR43096">
    <property type="entry name" value="DNAJ HOMOLOG 1, MITOCHONDRIAL-RELATED"/>
    <property type="match status" value="1"/>
</dbReference>
<dbReference type="Pfam" id="PF00226">
    <property type="entry name" value="DnaJ"/>
    <property type="match status" value="1"/>
</dbReference>
<dbReference type="Pfam" id="PF01556">
    <property type="entry name" value="DnaJ_C"/>
    <property type="match status" value="1"/>
</dbReference>
<dbReference type="Pfam" id="PF00684">
    <property type="entry name" value="DnaJ_CXXCXGXG"/>
    <property type="match status" value="1"/>
</dbReference>
<dbReference type="PRINTS" id="PR00625">
    <property type="entry name" value="JDOMAIN"/>
</dbReference>
<dbReference type="SMART" id="SM00271">
    <property type="entry name" value="DnaJ"/>
    <property type="match status" value="1"/>
</dbReference>
<dbReference type="SUPFAM" id="SSF46565">
    <property type="entry name" value="Chaperone J-domain"/>
    <property type="match status" value="1"/>
</dbReference>
<dbReference type="SUPFAM" id="SSF57938">
    <property type="entry name" value="DnaJ/Hsp40 cysteine-rich domain"/>
    <property type="match status" value="1"/>
</dbReference>
<dbReference type="SUPFAM" id="SSF49493">
    <property type="entry name" value="HSP40/DnaJ peptide-binding domain"/>
    <property type="match status" value="2"/>
</dbReference>
<dbReference type="PROSITE" id="PS00636">
    <property type="entry name" value="DNAJ_1"/>
    <property type="match status" value="1"/>
</dbReference>
<dbReference type="PROSITE" id="PS50076">
    <property type="entry name" value="DNAJ_2"/>
    <property type="match status" value="1"/>
</dbReference>
<dbReference type="PROSITE" id="PS51188">
    <property type="entry name" value="ZF_CR"/>
    <property type="match status" value="1"/>
</dbReference>
<sequence>MAKDDYYELLGVQKGASEEELKKAYRKKAVQYHPDKNPGNKEAEEMFKKISHAYEVLKDPEKRAAYDRYGPAAFEGAGAGAGMGGMRGGGGFHDPFDIFREVFGQQGGMGGGIFEEMFGGGRGGGGQDGADLRYDLEITLEEAARGAEKEISFRKLVACERCDGSGAEPGSKRVTCPTCRGAGQVRRSGGIITFTQTCPTCGGMGTKIEKPCTVCHGEGRVRRTTKLNVRIPPGVDNGSRLRSSGNGEAGVAGGQNGDLYIVISVQEHELFERQGDDLFCEIPIKFTLATLGGTIEVPTLFGKASLKIPVGTQSGTTFRLRDKGMPSLRGGRQGDQLVRVHVEVPQSLTPEQRKILEDFARVSGDASEPTSRSFFEKAKKFF</sequence>
<protein>
    <recommendedName>
        <fullName evidence="1">Chaperone protein DnaJ</fullName>
    </recommendedName>
</protein>
<evidence type="ECO:0000255" key="1">
    <source>
        <dbReference type="HAMAP-Rule" id="MF_01152"/>
    </source>
</evidence>
<evidence type="ECO:0000256" key="2">
    <source>
        <dbReference type="SAM" id="MobiDB-lite"/>
    </source>
</evidence>